<accession>A6TJM4</accession>
<name>SP5G_ALKMQ</name>
<proteinExistence type="inferred from homology"/>
<dbReference type="EMBL" id="CP000724">
    <property type="protein sequence ID" value="ABR46392.1"/>
    <property type="molecule type" value="Genomic_DNA"/>
</dbReference>
<dbReference type="RefSeq" id="WP_011971301.1">
    <property type="nucleotide sequence ID" value="NC_009633.1"/>
</dbReference>
<dbReference type="SMR" id="A6TJM4"/>
<dbReference type="STRING" id="293826.Amet_0155"/>
<dbReference type="KEGG" id="amt:Amet_0155"/>
<dbReference type="eggNOG" id="COG2088">
    <property type="taxonomic scope" value="Bacteria"/>
</dbReference>
<dbReference type="HOGENOM" id="CLU_103669_2_1_9"/>
<dbReference type="OrthoDB" id="9796286at2"/>
<dbReference type="Proteomes" id="UP000001572">
    <property type="component" value="Chromosome"/>
</dbReference>
<dbReference type="GO" id="GO:0000917">
    <property type="term" value="P:division septum assembly"/>
    <property type="evidence" value="ECO:0007669"/>
    <property type="project" value="UniProtKB-KW"/>
</dbReference>
<dbReference type="GO" id="GO:0030435">
    <property type="term" value="P:sporulation resulting in formation of a cellular spore"/>
    <property type="evidence" value="ECO:0007669"/>
    <property type="project" value="InterPro"/>
</dbReference>
<dbReference type="Gene3D" id="3.30.1120.40">
    <property type="entry name" value="Stage V sporulation protein G"/>
    <property type="match status" value="1"/>
</dbReference>
<dbReference type="HAMAP" id="MF_00819">
    <property type="entry name" value="SpoVG"/>
    <property type="match status" value="1"/>
</dbReference>
<dbReference type="InterPro" id="IPR007170">
    <property type="entry name" value="SpoVG"/>
</dbReference>
<dbReference type="InterPro" id="IPR036751">
    <property type="entry name" value="SpoVG_sf"/>
</dbReference>
<dbReference type="NCBIfam" id="NF009749">
    <property type="entry name" value="PRK13259.1"/>
    <property type="match status" value="1"/>
</dbReference>
<dbReference type="PANTHER" id="PTHR38429">
    <property type="entry name" value="SEPTATION PROTEIN SPOVG-RELATED"/>
    <property type="match status" value="1"/>
</dbReference>
<dbReference type="PANTHER" id="PTHR38429:SF1">
    <property type="entry name" value="SEPTATION PROTEIN SPOVG-RELATED"/>
    <property type="match status" value="1"/>
</dbReference>
<dbReference type="Pfam" id="PF04026">
    <property type="entry name" value="SpoVG"/>
    <property type="match status" value="1"/>
</dbReference>
<dbReference type="SUPFAM" id="SSF160537">
    <property type="entry name" value="SpoVG-like"/>
    <property type="match status" value="1"/>
</dbReference>
<comment type="function">
    <text evidence="1">Could be involved in septation.</text>
</comment>
<comment type="similarity">
    <text evidence="1">Belongs to the SpoVG family.</text>
</comment>
<sequence>MKVTDVRIRKVAAEGKMKAIVSVTFDEEFVVHDIKIIEGQNGLFIAMPSRKMGEGDFRDIAHPINSDTRSKIQDAIFAEYAIMNEEVQVQVQVTEEAL</sequence>
<protein>
    <recommendedName>
        <fullName evidence="1">Putative septation protein SpoVG</fullName>
    </recommendedName>
</protein>
<gene>
    <name evidence="1" type="primary">spoVG</name>
    <name type="ordered locus">Amet_0155</name>
</gene>
<reference key="1">
    <citation type="journal article" date="2016" name="Genome Announc.">
        <title>Complete genome sequence of Alkaliphilus metalliredigens strain QYMF, an alkaliphilic and metal-reducing bacterium isolated from borax-contaminated leachate ponds.</title>
        <authorList>
            <person name="Hwang C."/>
            <person name="Copeland A."/>
            <person name="Lucas S."/>
            <person name="Lapidus A."/>
            <person name="Barry K."/>
            <person name="Detter J.C."/>
            <person name="Glavina Del Rio T."/>
            <person name="Hammon N."/>
            <person name="Israni S."/>
            <person name="Dalin E."/>
            <person name="Tice H."/>
            <person name="Pitluck S."/>
            <person name="Chertkov O."/>
            <person name="Brettin T."/>
            <person name="Bruce D."/>
            <person name="Han C."/>
            <person name="Schmutz J."/>
            <person name="Larimer F."/>
            <person name="Land M.L."/>
            <person name="Hauser L."/>
            <person name="Kyrpides N."/>
            <person name="Mikhailova N."/>
            <person name="Ye Q."/>
            <person name="Zhou J."/>
            <person name="Richardson P."/>
            <person name="Fields M.W."/>
        </authorList>
    </citation>
    <scope>NUCLEOTIDE SEQUENCE [LARGE SCALE GENOMIC DNA]</scope>
    <source>
        <strain>QYMF</strain>
    </source>
</reference>
<organism>
    <name type="scientific">Alkaliphilus metalliredigens (strain QYMF)</name>
    <dbReference type="NCBI Taxonomy" id="293826"/>
    <lineage>
        <taxon>Bacteria</taxon>
        <taxon>Bacillati</taxon>
        <taxon>Bacillota</taxon>
        <taxon>Clostridia</taxon>
        <taxon>Peptostreptococcales</taxon>
        <taxon>Natronincolaceae</taxon>
        <taxon>Alkaliphilus</taxon>
    </lineage>
</organism>
<keyword id="KW-0131">Cell cycle</keyword>
<keyword id="KW-0132">Cell division</keyword>
<keyword id="KW-1185">Reference proteome</keyword>
<keyword id="KW-0717">Septation</keyword>
<feature type="chain" id="PRO_1000062416" description="Putative septation protein SpoVG">
    <location>
        <begin position="1"/>
        <end position="98"/>
    </location>
</feature>
<evidence type="ECO:0000255" key="1">
    <source>
        <dbReference type="HAMAP-Rule" id="MF_00819"/>
    </source>
</evidence>